<evidence type="ECO:0000255" key="1">
    <source>
        <dbReference type="HAMAP-Rule" id="MF_00547"/>
    </source>
</evidence>
<evidence type="ECO:0000305" key="2"/>
<sequence length="61" mass="6995">MKGTPSFGKMNKTPTHVRCRRCGRNSFNARKGYCAACGFGRSKKIRRYSWQNKKVNGVRLV</sequence>
<comment type="function">
    <text evidence="1">Binds to the 23S rRNA.</text>
</comment>
<comment type="cofactor">
    <cofactor evidence="1">
        <name>Zn(2+)</name>
        <dbReference type="ChEBI" id="CHEBI:29105"/>
    </cofactor>
    <text evidence="1">Binds 1 zinc ion per subunit.</text>
</comment>
<comment type="similarity">
    <text evidence="1">Belongs to the eukaryotic ribosomal protein eL37 family.</text>
</comment>
<reference key="1">
    <citation type="journal article" date="2005" name="J. Bacteriol.">
        <title>The genome of Sulfolobus acidocaldarius, a model organism of the Crenarchaeota.</title>
        <authorList>
            <person name="Chen L."/>
            <person name="Bruegger K."/>
            <person name="Skovgaard M."/>
            <person name="Redder P."/>
            <person name="She Q."/>
            <person name="Torarinsson E."/>
            <person name="Greve B."/>
            <person name="Awayez M."/>
            <person name="Zibat A."/>
            <person name="Klenk H.-P."/>
            <person name="Garrett R.A."/>
        </authorList>
    </citation>
    <scope>NUCLEOTIDE SEQUENCE [LARGE SCALE GENOMIC DNA]</scope>
    <source>
        <strain>ATCC 33909 / DSM 639 / JCM 8929 / NBRC 15157 / NCIMB 11770</strain>
    </source>
</reference>
<proteinExistence type="evidence at protein level"/>
<protein>
    <recommendedName>
        <fullName evidence="1">Large ribosomal subunit protein eL37</fullName>
    </recommendedName>
    <alternativeName>
        <fullName evidence="2">50S ribosomal protein L37e</fullName>
    </alternativeName>
</protein>
<feature type="chain" id="PRO_0000139738" description="Large ribosomal subunit protein eL37">
    <location>
        <begin position="1"/>
        <end position="61"/>
    </location>
</feature>
<feature type="zinc finger region" description="C4-type" evidence="1">
    <location>
        <begin position="19"/>
        <end position="37"/>
    </location>
</feature>
<feature type="binding site" evidence="1">
    <location>
        <position position="19"/>
    </location>
    <ligand>
        <name>Zn(2+)</name>
        <dbReference type="ChEBI" id="CHEBI:29105"/>
    </ligand>
</feature>
<feature type="binding site" evidence="1">
    <location>
        <position position="22"/>
    </location>
    <ligand>
        <name>Zn(2+)</name>
        <dbReference type="ChEBI" id="CHEBI:29105"/>
    </ligand>
</feature>
<feature type="binding site" evidence="1">
    <location>
        <position position="34"/>
    </location>
    <ligand>
        <name>Zn(2+)</name>
        <dbReference type="ChEBI" id="CHEBI:29105"/>
    </ligand>
</feature>
<feature type="binding site" evidence="1">
    <location>
        <position position="37"/>
    </location>
    <ligand>
        <name>Zn(2+)</name>
        <dbReference type="ChEBI" id="CHEBI:29105"/>
    </ligand>
</feature>
<dbReference type="EMBL" id="CP000077">
    <property type="protein sequence ID" value="AAY80030.1"/>
    <property type="molecule type" value="Genomic_DNA"/>
</dbReference>
<dbReference type="RefSeq" id="WP_011277532.1">
    <property type="nucleotide sequence ID" value="NC_007181.1"/>
</dbReference>
<dbReference type="PDB" id="8HKU">
    <property type="method" value="EM"/>
    <property type="resolution" value="2.72 A"/>
    <property type="chains" value="L37E=1-54"/>
</dbReference>
<dbReference type="PDB" id="8HKV">
    <property type="method" value="EM"/>
    <property type="resolution" value="4.94 A"/>
    <property type="chains" value="L37E=1-54"/>
</dbReference>
<dbReference type="PDB" id="8HKY">
    <property type="method" value="EM"/>
    <property type="resolution" value="4.45 A"/>
    <property type="chains" value="L37E=1-54"/>
</dbReference>
<dbReference type="PDB" id="8HKZ">
    <property type="method" value="EM"/>
    <property type="resolution" value="4.78 A"/>
    <property type="chains" value="L37E=1-54"/>
</dbReference>
<dbReference type="PDB" id="8HL1">
    <property type="method" value="EM"/>
    <property type="resolution" value="3.93 A"/>
    <property type="chains" value="L37E=1-54"/>
</dbReference>
<dbReference type="PDB" id="8HL2">
    <property type="method" value="EM"/>
    <property type="resolution" value="4.10 A"/>
    <property type="chains" value="L37E=1-54"/>
</dbReference>
<dbReference type="PDB" id="8HL3">
    <property type="method" value="EM"/>
    <property type="resolution" value="4.80 A"/>
    <property type="chains" value="L37E=1-54"/>
</dbReference>
<dbReference type="PDB" id="8HL4">
    <property type="method" value="EM"/>
    <property type="resolution" value="4.62 A"/>
    <property type="chains" value="L37E=1-54"/>
</dbReference>
<dbReference type="PDB" id="8HL5">
    <property type="method" value="EM"/>
    <property type="resolution" value="5.72 A"/>
    <property type="chains" value="L37E=1-54"/>
</dbReference>
<dbReference type="PDBsum" id="8HKU"/>
<dbReference type="PDBsum" id="8HKV"/>
<dbReference type="PDBsum" id="8HKY"/>
<dbReference type="PDBsum" id="8HKZ"/>
<dbReference type="PDBsum" id="8HL1"/>
<dbReference type="PDBsum" id="8HL2"/>
<dbReference type="PDBsum" id="8HL3"/>
<dbReference type="PDBsum" id="8HL4"/>
<dbReference type="PDBsum" id="8HL5"/>
<dbReference type="EMDB" id="EMD-34860"/>
<dbReference type="EMDB" id="EMD-34861"/>
<dbReference type="EMDB" id="EMD-34863"/>
<dbReference type="EMDB" id="EMD-34864"/>
<dbReference type="EMDB" id="EMD-34866"/>
<dbReference type="EMDB" id="EMD-34867"/>
<dbReference type="EMDB" id="EMD-34868"/>
<dbReference type="EMDB" id="EMD-34869"/>
<dbReference type="EMDB" id="EMD-34870"/>
<dbReference type="SMR" id="Q4JAZ9"/>
<dbReference type="STRING" id="330779.Saci_0642"/>
<dbReference type="GeneID" id="14551164"/>
<dbReference type="KEGG" id="sai:Saci_0642"/>
<dbReference type="PATRIC" id="fig|330779.12.peg.617"/>
<dbReference type="eggNOG" id="arCOG04126">
    <property type="taxonomic scope" value="Archaea"/>
</dbReference>
<dbReference type="HOGENOM" id="CLU_208825_0_0_2"/>
<dbReference type="Proteomes" id="UP000001018">
    <property type="component" value="Chromosome"/>
</dbReference>
<dbReference type="GO" id="GO:0022625">
    <property type="term" value="C:cytosolic large ribosomal subunit"/>
    <property type="evidence" value="ECO:0007669"/>
    <property type="project" value="TreeGrafter"/>
</dbReference>
<dbReference type="GO" id="GO:0019843">
    <property type="term" value="F:rRNA binding"/>
    <property type="evidence" value="ECO:0007669"/>
    <property type="project" value="UniProtKB-KW"/>
</dbReference>
<dbReference type="GO" id="GO:0003735">
    <property type="term" value="F:structural constituent of ribosome"/>
    <property type="evidence" value="ECO:0007669"/>
    <property type="project" value="InterPro"/>
</dbReference>
<dbReference type="GO" id="GO:0008270">
    <property type="term" value="F:zinc ion binding"/>
    <property type="evidence" value="ECO:0007669"/>
    <property type="project" value="UniProtKB-UniRule"/>
</dbReference>
<dbReference type="GO" id="GO:0006412">
    <property type="term" value="P:translation"/>
    <property type="evidence" value="ECO:0007669"/>
    <property type="project" value="UniProtKB-UniRule"/>
</dbReference>
<dbReference type="FunFam" id="2.20.25.30:FF:000003">
    <property type="entry name" value="50S ribosomal protein L37e"/>
    <property type="match status" value="1"/>
</dbReference>
<dbReference type="Gene3D" id="2.20.25.30">
    <property type="match status" value="1"/>
</dbReference>
<dbReference type="HAMAP" id="MF_00547">
    <property type="entry name" value="Ribosomal_eL37"/>
    <property type="match status" value="1"/>
</dbReference>
<dbReference type="InterPro" id="IPR001569">
    <property type="entry name" value="Ribosomal_eL37"/>
</dbReference>
<dbReference type="InterPro" id="IPR011331">
    <property type="entry name" value="Ribosomal_eL37/eL43"/>
</dbReference>
<dbReference type="InterPro" id="IPR018267">
    <property type="entry name" value="Ribosomal_eL37_CS"/>
</dbReference>
<dbReference type="InterPro" id="IPR011332">
    <property type="entry name" value="Ribosomal_zn-bd"/>
</dbReference>
<dbReference type="NCBIfam" id="NF003214">
    <property type="entry name" value="PRK04179.1"/>
    <property type="match status" value="1"/>
</dbReference>
<dbReference type="PANTHER" id="PTHR10768">
    <property type="entry name" value="60S RIBOSOMAL PROTEIN L37"/>
    <property type="match status" value="1"/>
</dbReference>
<dbReference type="PANTHER" id="PTHR10768:SF0">
    <property type="entry name" value="RIBOSOMAL PROTEIN L37"/>
    <property type="match status" value="1"/>
</dbReference>
<dbReference type="Pfam" id="PF01907">
    <property type="entry name" value="Ribosomal_L37e"/>
    <property type="match status" value="1"/>
</dbReference>
<dbReference type="SUPFAM" id="SSF57829">
    <property type="entry name" value="Zn-binding ribosomal proteins"/>
    <property type="match status" value="1"/>
</dbReference>
<dbReference type="PROSITE" id="PS01077">
    <property type="entry name" value="RIBOSOMAL_L37E"/>
    <property type="match status" value="1"/>
</dbReference>
<name>RL37_SULAC</name>
<gene>
    <name evidence="1" type="primary">rpl37e</name>
    <name type="ordered locus">Saci_0642</name>
</gene>
<keyword id="KW-0002">3D-structure</keyword>
<keyword id="KW-0479">Metal-binding</keyword>
<keyword id="KW-1185">Reference proteome</keyword>
<keyword id="KW-0687">Ribonucleoprotein</keyword>
<keyword id="KW-0689">Ribosomal protein</keyword>
<keyword id="KW-0694">RNA-binding</keyword>
<keyword id="KW-0699">rRNA-binding</keyword>
<keyword id="KW-0862">Zinc</keyword>
<keyword id="KW-0863">Zinc-finger</keyword>
<organism>
    <name type="scientific">Sulfolobus acidocaldarius (strain ATCC 33909 / DSM 639 / JCM 8929 / NBRC 15157 / NCIMB 11770)</name>
    <dbReference type="NCBI Taxonomy" id="330779"/>
    <lineage>
        <taxon>Archaea</taxon>
        <taxon>Thermoproteota</taxon>
        <taxon>Thermoprotei</taxon>
        <taxon>Sulfolobales</taxon>
        <taxon>Sulfolobaceae</taxon>
        <taxon>Sulfolobus</taxon>
    </lineage>
</organism>
<accession>Q4JAZ9</accession>